<feature type="transit peptide" description="Mitochondrion" evidence="2">
    <location>
        <begin position="1"/>
        <end status="unknown"/>
    </location>
</feature>
<feature type="chain" id="PRO_0000022409" description="Sulfide:quinone oxidoreductase, mitochondrial">
    <location>
        <begin status="unknown"/>
        <end position="450"/>
    </location>
</feature>
<feature type="active site" description="Cysteine persulfide intermediate" evidence="1">
    <location>
        <position position="201"/>
    </location>
</feature>
<feature type="active site" description="Cysteine persulfide intermediate" evidence="1">
    <location>
        <position position="379"/>
    </location>
</feature>
<feature type="binding site" evidence="1">
    <location>
        <begin position="53"/>
        <end position="54"/>
    </location>
    <ligand>
        <name>FAD</name>
        <dbReference type="ChEBI" id="CHEBI:57692"/>
    </ligand>
</feature>
<feature type="binding site" evidence="1">
    <location>
        <position position="75"/>
    </location>
    <ligand>
        <name>FAD</name>
        <dbReference type="ChEBI" id="CHEBI:57692"/>
    </ligand>
</feature>
<feature type="binding site" evidence="1">
    <location>
        <position position="83"/>
    </location>
    <ligand>
        <name>FAD</name>
        <dbReference type="ChEBI" id="CHEBI:57692"/>
    </ligand>
</feature>
<feature type="binding site" evidence="1">
    <location>
        <position position="118"/>
    </location>
    <ligand>
        <name>FAD</name>
        <dbReference type="ChEBI" id="CHEBI:57692"/>
    </ligand>
</feature>
<feature type="binding site" evidence="1">
    <location>
        <position position="336"/>
    </location>
    <ligand>
        <name>FAD</name>
        <dbReference type="ChEBI" id="CHEBI:57692"/>
    </ligand>
</feature>
<feature type="binding site" evidence="1">
    <location>
        <begin position="344"/>
        <end position="347"/>
    </location>
    <ligand>
        <name>FAD</name>
        <dbReference type="ChEBI" id="CHEBI:57692"/>
    </ligand>
</feature>
<feature type="modified residue" description="N6-acetyllysine" evidence="6">
    <location>
        <position position="134"/>
    </location>
</feature>
<feature type="modified residue" description="N6-acetyllysine" evidence="6">
    <location>
        <position position="173"/>
    </location>
</feature>
<feature type="modified residue" description="Phosphoserine" evidence="5">
    <location>
        <position position="343"/>
    </location>
</feature>
<feature type="disulfide bond" evidence="1">
    <location>
        <begin position="201"/>
        <end position="379"/>
    </location>
</feature>
<feature type="sequence conflict" description="In Ref. 3; AAH11153." evidence="3" ref="3">
    <original>T</original>
    <variation>A</variation>
    <location>
        <position position="6"/>
    </location>
</feature>
<feature type="sequence conflict" description="In Ref. 2; BAB25580." evidence="3" ref="2">
    <original>S</original>
    <variation>T</variation>
    <location>
        <position position="99"/>
    </location>
</feature>
<feature type="sequence conflict" description="In Ref. 1; AAD50300 and 3; AAH11153." evidence="3" ref="1 3">
    <original>G</original>
    <variation>D</variation>
    <location>
        <position position="184"/>
    </location>
</feature>
<feature type="sequence conflict" description="In Ref. 1; AAD50300." evidence="3" ref="1">
    <original>F</original>
    <variation>L</variation>
    <location>
        <position position="185"/>
    </location>
</feature>
<dbReference type="EC" id="1.8.5.8" evidence="1"/>
<dbReference type="EMBL" id="AF174535">
    <property type="protein sequence ID" value="AAD50300.1"/>
    <property type="molecule type" value="mRNA"/>
</dbReference>
<dbReference type="EMBL" id="AK008290">
    <property type="protein sequence ID" value="BAB25580.1"/>
    <property type="molecule type" value="mRNA"/>
</dbReference>
<dbReference type="EMBL" id="AK075598">
    <property type="protein sequence ID" value="BAC35847.1"/>
    <property type="molecule type" value="mRNA"/>
</dbReference>
<dbReference type="EMBL" id="AL928950">
    <property type="status" value="NOT_ANNOTATED_CDS"/>
    <property type="molecule type" value="Genomic_DNA"/>
</dbReference>
<dbReference type="EMBL" id="BC011153">
    <property type="protein sequence ID" value="AAH11153.1"/>
    <property type="molecule type" value="mRNA"/>
</dbReference>
<dbReference type="CCDS" id="CCDS16669.1"/>
<dbReference type="RefSeq" id="NP_001155975.1">
    <property type="nucleotide sequence ID" value="NM_001162503.1"/>
</dbReference>
<dbReference type="RefSeq" id="NP_067482.4">
    <property type="nucleotide sequence ID" value="NM_021507.5"/>
</dbReference>
<dbReference type="RefSeq" id="XP_006500029.1">
    <property type="nucleotide sequence ID" value="XM_006499966.3"/>
</dbReference>
<dbReference type="SMR" id="Q9R112"/>
<dbReference type="BioGRID" id="208481">
    <property type="interactions" value="8"/>
</dbReference>
<dbReference type="FunCoup" id="Q9R112">
    <property type="interactions" value="741"/>
</dbReference>
<dbReference type="IntAct" id="Q9R112">
    <property type="interactions" value="2"/>
</dbReference>
<dbReference type="MINT" id="Q9R112"/>
<dbReference type="STRING" id="10090.ENSMUSP00000106133"/>
<dbReference type="GlyGen" id="Q9R112">
    <property type="glycosylation" value="2 sites, 1 N-linked glycan (1 site), 1 O-linked glycan (1 site)"/>
</dbReference>
<dbReference type="iPTMnet" id="Q9R112"/>
<dbReference type="PhosphoSitePlus" id="Q9R112"/>
<dbReference type="SwissPalm" id="Q9R112"/>
<dbReference type="jPOST" id="Q9R112"/>
<dbReference type="PaxDb" id="10090-ENSMUSP00000106133"/>
<dbReference type="PeptideAtlas" id="Q9R112"/>
<dbReference type="ProteomicsDB" id="261583"/>
<dbReference type="Pumba" id="Q9R112"/>
<dbReference type="DNASU" id="59010"/>
<dbReference type="Ensembl" id="ENSMUST00000005953.11">
    <property type="protein sequence ID" value="ENSMUSP00000005953.5"/>
    <property type="gene ID" value="ENSMUSG00000005803.15"/>
</dbReference>
<dbReference type="Ensembl" id="ENSMUST00000110506.9">
    <property type="protein sequence ID" value="ENSMUSP00000106133.3"/>
    <property type="gene ID" value="ENSMUSG00000005803.15"/>
</dbReference>
<dbReference type="GeneID" id="59010"/>
<dbReference type="KEGG" id="mmu:59010"/>
<dbReference type="UCSC" id="uc008mbh.2">
    <property type="organism name" value="mouse"/>
</dbReference>
<dbReference type="AGR" id="MGI:1929899"/>
<dbReference type="CTD" id="58472"/>
<dbReference type="MGI" id="MGI:1929899">
    <property type="gene designation" value="Sqor"/>
</dbReference>
<dbReference type="VEuPathDB" id="HostDB:ENSMUSG00000005803"/>
<dbReference type="eggNOG" id="KOG3851">
    <property type="taxonomic scope" value="Eukaryota"/>
</dbReference>
<dbReference type="GeneTree" id="ENSGT00390000019406"/>
<dbReference type="HOGENOM" id="CLU_030742_2_1_1"/>
<dbReference type="InParanoid" id="Q9R112"/>
<dbReference type="OMA" id="ERYSMFI"/>
<dbReference type="OrthoDB" id="5376590at2759"/>
<dbReference type="PhylomeDB" id="Q9R112"/>
<dbReference type="TreeFam" id="TF314384"/>
<dbReference type="Reactome" id="R-MMU-1614517">
    <property type="pathway name" value="Sulfide oxidation to sulfate"/>
</dbReference>
<dbReference type="BioGRID-ORCS" id="59010">
    <property type="hits" value="0 hits in 76 CRISPR screens"/>
</dbReference>
<dbReference type="ChiTaRS" id="Sqor">
    <property type="organism name" value="mouse"/>
</dbReference>
<dbReference type="PRO" id="PR:Q9R112"/>
<dbReference type="Proteomes" id="UP000000589">
    <property type="component" value="Chromosome 2"/>
</dbReference>
<dbReference type="RNAct" id="Q9R112">
    <property type="molecule type" value="protein"/>
</dbReference>
<dbReference type="Bgee" id="ENSMUSG00000005803">
    <property type="expression patterns" value="Expressed in right colon and 203 other cell types or tissues"/>
</dbReference>
<dbReference type="ExpressionAtlas" id="Q9R112">
    <property type="expression patterns" value="baseline and differential"/>
</dbReference>
<dbReference type="GO" id="GO:0005743">
    <property type="term" value="C:mitochondrial inner membrane"/>
    <property type="evidence" value="ECO:0007005"/>
    <property type="project" value="MGI"/>
</dbReference>
<dbReference type="GO" id="GO:0005739">
    <property type="term" value="C:mitochondrion"/>
    <property type="evidence" value="ECO:0007005"/>
    <property type="project" value="MGI"/>
</dbReference>
<dbReference type="GO" id="GO:0106436">
    <property type="term" value="F:glutathione-dependent sulfide quinone oxidoreductase activity"/>
    <property type="evidence" value="ECO:0007669"/>
    <property type="project" value="UniProtKB-EC"/>
</dbReference>
<dbReference type="GO" id="GO:0048038">
    <property type="term" value="F:quinone binding"/>
    <property type="evidence" value="ECO:0007669"/>
    <property type="project" value="UniProtKB-KW"/>
</dbReference>
<dbReference type="GO" id="GO:0070224">
    <property type="term" value="F:sulfide:quinone oxidoreductase activity"/>
    <property type="evidence" value="ECO:0000250"/>
    <property type="project" value="UniProtKB"/>
</dbReference>
<dbReference type="GO" id="GO:0070221">
    <property type="term" value="P:sulfide oxidation, using sulfide:quinone oxidoreductase"/>
    <property type="evidence" value="ECO:0000250"/>
    <property type="project" value="UniProtKB"/>
</dbReference>
<dbReference type="FunFam" id="3.50.50.60:FF:000034">
    <property type="entry name" value="sulfide:quinone oxidoreductase, mitochondrial"/>
    <property type="match status" value="1"/>
</dbReference>
<dbReference type="Gene3D" id="3.50.50.60">
    <property type="entry name" value="FAD/NAD(P)-binding domain"/>
    <property type="match status" value="2"/>
</dbReference>
<dbReference type="InterPro" id="IPR036188">
    <property type="entry name" value="FAD/NAD-bd_sf"/>
</dbReference>
<dbReference type="InterPro" id="IPR023753">
    <property type="entry name" value="FAD/NAD-binding_dom"/>
</dbReference>
<dbReference type="InterPro" id="IPR015904">
    <property type="entry name" value="Sulphide_quinone_reductase"/>
</dbReference>
<dbReference type="PANTHER" id="PTHR10632">
    <property type="entry name" value="SULFIDE:QUINONE OXIDOREDUCTASE"/>
    <property type="match status" value="1"/>
</dbReference>
<dbReference type="PANTHER" id="PTHR10632:SF2">
    <property type="entry name" value="SULFIDE:QUINONE OXIDOREDUCTASE, MITOCHONDRIAL"/>
    <property type="match status" value="1"/>
</dbReference>
<dbReference type="Pfam" id="PF07992">
    <property type="entry name" value="Pyr_redox_2"/>
    <property type="match status" value="1"/>
</dbReference>
<dbReference type="SUPFAM" id="SSF51905">
    <property type="entry name" value="FAD/NAD(P)-binding domain"/>
    <property type="match status" value="1"/>
</dbReference>
<gene>
    <name evidence="1" type="primary">Sqor</name>
    <name evidence="4" type="synonym">Sqrdl</name>
</gene>
<proteinExistence type="evidence at protein level"/>
<reference key="1">
    <citation type="submission" date="1999-08" db="EMBL/GenBank/DDBJ databases">
        <title>Positional cloning of the pallid gene in the pallid mutant.</title>
        <authorList>
            <person name="Huang L."/>
            <person name="Gitschier J."/>
        </authorList>
    </citation>
    <scope>NUCLEOTIDE SEQUENCE [MRNA]</scope>
    <source>
        <strain>C57BL/6 X CBA</strain>
        <tissue>Liver</tissue>
    </source>
</reference>
<reference key="2">
    <citation type="journal article" date="2005" name="Science">
        <title>The transcriptional landscape of the mammalian genome.</title>
        <authorList>
            <person name="Carninci P."/>
            <person name="Kasukawa T."/>
            <person name="Katayama S."/>
            <person name="Gough J."/>
            <person name="Frith M.C."/>
            <person name="Maeda N."/>
            <person name="Oyama R."/>
            <person name="Ravasi T."/>
            <person name="Lenhard B."/>
            <person name="Wells C."/>
            <person name="Kodzius R."/>
            <person name="Shimokawa K."/>
            <person name="Bajic V.B."/>
            <person name="Brenner S.E."/>
            <person name="Batalov S."/>
            <person name="Forrest A.R."/>
            <person name="Zavolan M."/>
            <person name="Davis M.J."/>
            <person name="Wilming L.G."/>
            <person name="Aidinis V."/>
            <person name="Allen J.E."/>
            <person name="Ambesi-Impiombato A."/>
            <person name="Apweiler R."/>
            <person name="Aturaliya R.N."/>
            <person name="Bailey T.L."/>
            <person name="Bansal M."/>
            <person name="Baxter L."/>
            <person name="Beisel K.W."/>
            <person name="Bersano T."/>
            <person name="Bono H."/>
            <person name="Chalk A.M."/>
            <person name="Chiu K.P."/>
            <person name="Choudhary V."/>
            <person name="Christoffels A."/>
            <person name="Clutterbuck D.R."/>
            <person name="Crowe M.L."/>
            <person name="Dalla E."/>
            <person name="Dalrymple B.P."/>
            <person name="de Bono B."/>
            <person name="Della Gatta G."/>
            <person name="di Bernardo D."/>
            <person name="Down T."/>
            <person name="Engstrom P."/>
            <person name="Fagiolini M."/>
            <person name="Faulkner G."/>
            <person name="Fletcher C.F."/>
            <person name="Fukushima T."/>
            <person name="Furuno M."/>
            <person name="Futaki S."/>
            <person name="Gariboldi M."/>
            <person name="Georgii-Hemming P."/>
            <person name="Gingeras T.R."/>
            <person name="Gojobori T."/>
            <person name="Green R.E."/>
            <person name="Gustincich S."/>
            <person name="Harbers M."/>
            <person name="Hayashi Y."/>
            <person name="Hensch T.K."/>
            <person name="Hirokawa N."/>
            <person name="Hill D."/>
            <person name="Huminiecki L."/>
            <person name="Iacono M."/>
            <person name="Ikeo K."/>
            <person name="Iwama A."/>
            <person name="Ishikawa T."/>
            <person name="Jakt M."/>
            <person name="Kanapin A."/>
            <person name="Katoh M."/>
            <person name="Kawasawa Y."/>
            <person name="Kelso J."/>
            <person name="Kitamura H."/>
            <person name="Kitano H."/>
            <person name="Kollias G."/>
            <person name="Krishnan S.P."/>
            <person name="Kruger A."/>
            <person name="Kummerfeld S.K."/>
            <person name="Kurochkin I.V."/>
            <person name="Lareau L.F."/>
            <person name="Lazarevic D."/>
            <person name="Lipovich L."/>
            <person name="Liu J."/>
            <person name="Liuni S."/>
            <person name="McWilliam S."/>
            <person name="Madan Babu M."/>
            <person name="Madera M."/>
            <person name="Marchionni L."/>
            <person name="Matsuda H."/>
            <person name="Matsuzawa S."/>
            <person name="Miki H."/>
            <person name="Mignone F."/>
            <person name="Miyake S."/>
            <person name="Morris K."/>
            <person name="Mottagui-Tabar S."/>
            <person name="Mulder N."/>
            <person name="Nakano N."/>
            <person name="Nakauchi H."/>
            <person name="Ng P."/>
            <person name="Nilsson R."/>
            <person name="Nishiguchi S."/>
            <person name="Nishikawa S."/>
            <person name="Nori F."/>
            <person name="Ohara O."/>
            <person name="Okazaki Y."/>
            <person name="Orlando V."/>
            <person name="Pang K.C."/>
            <person name="Pavan W.J."/>
            <person name="Pavesi G."/>
            <person name="Pesole G."/>
            <person name="Petrovsky N."/>
            <person name="Piazza S."/>
            <person name="Reed J."/>
            <person name="Reid J.F."/>
            <person name="Ring B.Z."/>
            <person name="Ringwald M."/>
            <person name="Rost B."/>
            <person name="Ruan Y."/>
            <person name="Salzberg S.L."/>
            <person name="Sandelin A."/>
            <person name="Schneider C."/>
            <person name="Schoenbach C."/>
            <person name="Sekiguchi K."/>
            <person name="Semple C.A."/>
            <person name="Seno S."/>
            <person name="Sessa L."/>
            <person name="Sheng Y."/>
            <person name="Shibata Y."/>
            <person name="Shimada H."/>
            <person name="Shimada K."/>
            <person name="Silva D."/>
            <person name="Sinclair B."/>
            <person name="Sperling S."/>
            <person name="Stupka E."/>
            <person name="Sugiura K."/>
            <person name="Sultana R."/>
            <person name="Takenaka Y."/>
            <person name="Taki K."/>
            <person name="Tammoja K."/>
            <person name="Tan S.L."/>
            <person name="Tang S."/>
            <person name="Taylor M.S."/>
            <person name="Tegner J."/>
            <person name="Teichmann S.A."/>
            <person name="Ueda H.R."/>
            <person name="van Nimwegen E."/>
            <person name="Verardo R."/>
            <person name="Wei C.L."/>
            <person name="Yagi K."/>
            <person name="Yamanishi H."/>
            <person name="Zabarovsky E."/>
            <person name="Zhu S."/>
            <person name="Zimmer A."/>
            <person name="Hide W."/>
            <person name="Bult C."/>
            <person name="Grimmond S.M."/>
            <person name="Teasdale R.D."/>
            <person name="Liu E.T."/>
            <person name="Brusic V."/>
            <person name="Quackenbush J."/>
            <person name="Wahlestedt C."/>
            <person name="Mattick J.S."/>
            <person name="Hume D.A."/>
            <person name="Kai C."/>
            <person name="Sasaki D."/>
            <person name="Tomaru Y."/>
            <person name="Fukuda S."/>
            <person name="Kanamori-Katayama M."/>
            <person name="Suzuki M."/>
            <person name="Aoki J."/>
            <person name="Arakawa T."/>
            <person name="Iida J."/>
            <person name="Imamura K."/>
            <person name="Itoh M."/>
            <person name="Kato T."/>
            <person name="Kawaji H."/>
            <person name="Kawagashira N."/>
            <person name="Kawashima T."/>
            <person name="Kojima M."/>
            <person name="Kondo S."/>
            <person name="Konno H."/>
            <person name="Nakano K."/>
            <person name="Ninomiya N."/>
            <person name="Nishio T."/>
            <person name="Okada M."/>
            <person name="Plessy C."/>
            <person name="Shibata K."/>
            <person name="Shiraki T."/>
            <person name="Suzuki S."/>
            <person name="Tagami M."/>
            <person name="Waki K."/>
            <person name="Watahiki A."/>
            <person name="Okamura-Oho Y."/>
            <person name="Suzuki H."/>
            <person name="Kawai J."/>
            <person name="Hayashizaki Y."/>
        </authorList>
    </citation>
    <scope>NUCLEOTIDE SEQUENCE [LARGE SCALE MRNA]</scope>
    <source>
        <strain>C57BL/6J</strain>
        <tissue>Kidney</tissue>
        <tissue>Small intestine</tissue>
    </source>
</reference>
<reference key="3">
    <citation type="journal article" date="2004" name="Genome Res.">
        <title>The status, quality, and expansion of the NIH full-length cDNA project: the Mammalian Gene Collection (MGC).</title>
        <authorList>
            <consortium name="The MGC Project Team"/>
        </authorList>
    </citation>
    <scope>NUCLEOTIDE SEQUENCE [LARGE SCALE MRNA]</scope>
    <source>
        <tissue>Liver</tissue>
    </source>
</reference>
<reference key="4">
    <citation type="journal article" date="2010" name="Cell">
        <title>A tissue-specific atlas of mouse protein phosphorylation and expression.</title>
        <authorList>
            <person name="Huttlin E.L."/>
            <person name="Jedrychowski M.P."/>
            <person name="Elias J.E."/>
            <person name="Goswami T."/>
            <person name="Rad R."/>
            <person name="Beausoleil S.A."/>
            <person name="Villen J."/>
            <person name="Haas W."/>
            <person name="Sowa M.E."/>
            <person name="Gygi S.P."/>
        </authorList>
    </citation>
    <scope>PHOSPHORYLATION [LARGE SCALE ANALYSIS] AT SER-343</scope>
    <scope>IDENTIFICATION BY MASS SPECTROMETRY [LARGE SCALE ANALYSIS]</scope>
    <source>
        <tissue>Brown adipose tissue</tissue>
        <tissue>Heart</tissue>
        <tissue>Kidney</tissue>
        <tissue>Liver</tissue>
        <tissue>Lung</tissue>
        <tissue>Pancreas</tissue>
        <tissue>Spleen</tissue>
        <tissue>Testis</tissue>
    </source>
</reference>
<reference key="5">
    <citation type="journal article" date="2013" name="Proc. Natl. Acad. Sci. U.S.A.">
        <title>Label-free quantitative proteomics of the lysine acetylome in mitochondria identifies substrates of SIRT3 in metabolic pathways.</title>
        <authorList>
            <person name="Rardin M.J."/>
            <person name="Newman J.C."/>
            <person name="Held J.M."/>
            <person name="Cusack M.P."/>
            <person name="Sorensen D.J."/>
            <person name="Li B."/>
            <person name="Schilling B."/>
            <person name="Mooney S.D."/>
            <person name="Kahn C.R."/>
            <person name="Verdin E."/>
            <person name="Gibson B.W."/>
        </authorList>
    </citation>
    <scope>ACETYLATION [LARGE SCALE ANALYSIS] AT LYS-134 AND LYS-173</scope>
    <scope>IDENTIFICATION BY MASS SPECTROMETRY [LARGE SCALE ANALYSIS]</scope>
    <source>
        <tissue>Liver</tissue>
    </source>
</reference>
<protein>
    <recommendedName>
        <fullName evidence="3">Sulfide:quinone oxidoreductase, mitochondrial</fullName>
        <shortName>SQOR</shortName>
        <ecNumber evidence="1">1.8.5.8</ecNumber>
    </recommendedName>
    <alternativeName>
        <fullName evidence="1">Sulfide quinone oxidoreductase</fullName>
    </alternativeName>
</protein>
<name>SQOR_MOUSE</name>
<organism>
    <name type="scientific">Mus musculus</name>
    <name type="common">Mouse</name>
    <dbReference type="NCBI Taxonomy" id="10090"/>
    <lineage>
        <taxon>Eukaryota</taxon>
        <taxon>Metazoa</taxon>
        <taxon>Chordata</taxon>
        <taxon>Craniata</taxon>
        <taxon>Vertebrata</taxon>
        <taxon>Euteleostomi</taxon>
        <taxon>Mammalia</taxon>
        <taxon>Eutheria</taxon>
        <taxon>Euarchontoglires</taxon>
        <taxon>Glires</taxon>
        <taxon>Rodentia</taxon>
        <taxon>Myomorpha</taxon>
        <taxon>Muroidea</taxon>
        <taxon>Muridae</taxon>
        <taxon>Murinae</taxon>
        <taxon>Mus</taxon>
        <taxon>Mus</taxon>
    </lineage>
</organism>
<sequence length="450" mass="50282">MAPLVTVVSSPRARLFACFLRLGTQQAGPLQLHTGACCTAKNHYEVLVLGGGAGGITMATRMKRRVGAENVAIVEPSERHFYQPIWTLVGAGAKELSLSVRSTLSVIPSGVQWIQDRVAELNPDENCIRTDSGKEISYRYLIIALGIQLDYEKIKGLPEGFAYPKIGSNYSVKTVEKTWKALQGFKEGNALFTFPNTPVKCAGAPQKIMYLSEAYFRKTGKRPKANIIFNTALGTIFGVKKYADALQEIIRERDVSVNYKHNLIEVRPDKQEAVFEILDKPGETHVIPYEMLHVTPPMSAPDVLKRSPVADSAGWVDVDKETLQHKKYPNVFGIGDCTNLPTSKTAAAVAAQSGILDRTMCLIMKNQRPIKKYDGYTSCPLVTGYNRVILAEFDYTAQPLETFPFDQSKERITMYLMKADMMPFLYWNMMLRGYWGGPAFLRKLFHLGMN</sequence>
<comment type="function">
    <text evidence="1">Catalyzes the oxidation of hydrogen sulfide with the help of a quinone, such as ubiquinone-10, giving rise to thiosulfate and ultimately to sulfane (molecular sulfur) atoms. Requires an additional electron acceptor; can use sulfite, sulfide or cyanide (in vitro). It is believed the in vivo electron acceptor is glutathione.</text>
</comment>
<comment type="catalytic activity">
    <reaction evidence="1">
        <text>ubiquinone-10 + hydrogen sulfide + sulfite + 2 H(+) = ubiquinol-10 + thiosulfate</text>
        <dbReference type="Rhea" id="RHEA:38359"/>
        <dbReference type="ChEBI" id="CHEBI:15378"/>
        <dbReference type="ChEBI" id="CHEBI:17359"/>
        <dbReference type="ChEBI" id="CHEBI:29919"/>
        <dbReference type="ChEBI" id="CHEBI:33542"/>
        <dbReference type="ChEBI" id="CHEBI:46245"/>
        <dbReference type="ChEBI" id="CHEBI:64183"/>
    </reaction>
    <physiologicalReaction direction="left-to-right" evidence="1">
        <dbReference type="Rhea" id="RHEA:38360"/>
    </physiologicalReaction>
</comment>
<comment type="catalytic activity">
    <reaction evidence="1">
        <text>a quinone + hydrogen sulfide + glutathione + H(+) = S-sulfanylglutathione + a quinol</text>
        <dbReference type="Rhea" id="RHEA:55156"/>
        <dbReference type="ChEBI" id="CHEBI:15378"/>
        <dbReference type="ChEBI" id="CHEBI:24646"/>
        <dbReference type="ChEBI" id="CHEBI:29919"/>
        <dbReference type="ChEBI" id="CHEBI:57925"/>
        <dbReference type="ChEBI" id="CHEBI:58905"/>
        <dbReference type="ChEBI" id="CHEBI:132124"/>
        <dbReference type="EC" id="1.8.5.8"/>
    </reaction>
    <physiologicalReaction direction="left-to-right" evidence="1">
        <dbReference type="Rhea" id="RHEA:55157"/>
    </physiologicalReaction>
</comment>
<comment type="catalytic activity">
    <reaction evidence="1">
        <text>ubiquinone-10 + hydrogen sulfide + glutathione + H(+) = S-sulfanylglutathione + ubiquinol-10</text>
        <dbReference type="Rhea" id="RHEA:62608"/>
        <dbReference type="ChEBI" id="CHEBI:15378"/>
        <dbReference type="ChEBI" id="CHEBI:29919"/>
        <dbReference type="ChEBI" id="CHEBI:46245"/>
        <dbReference type="ChEBI" id="CHEBI:57925"/>
        <dbReference type="ChEBI" id="CHEBI:58905"/>
        <dbReference type="ChEBI" id="CHEBI:64183"/>
    </reaction>
    <physiologicalReaction direction="left-to-right" evidence="1">
        <dbReference type="Rhea" id="RHEA:62609"/>
    </physiologicalReaction>
</comment>
<comment type="cofactor">
    <cofactor evidence="1">
        <name>FAD</name>
        <dbReference type="ChEBI" id="CHEBI:57692"/>
    </cofactor>
    <text evidence="1">Binds 1 FAD per subunit.</text>
</comment>
<comment type="subcellular location">
    <subcellularLocation>
        <location evidence="1">Mitochondrion</location>
    </subcellularLocation>
</comment>
<comment type="similarity">
    <text evidence="3">Belongs to the SQRD family.</text>
</comment>
<accession>Q9R112</accession>
<accession>Q8BW20</accession>
<accession>Q91XA1</accession>
<accession>Q9D891</accession>
<evidence type="ECO:0000250" key="1">
    <source>
        <dbReference type="UniProtKB" id="Q9Y6N5"/>
    </source>
</evidence>
<evidence type="ECO:0000255" key="2"/>
<evidence type="ECO:0000305" key="3"/>
<evidence type="ECO:0000312" key="4">
    <source>
        <dbReference type="MGI" id="MGI:1929899"/>
    </source>
</evidence>
<evidence type="ECO:0007744" key="5">
    <source>
    </source>
</evidence>
<evidence type="ECO:0007744" key="6">
    <source>
    </source>
</evidence>
<keyword id="KW-0007">Acetylation</keyword>
<keyword id="KW-1015">Disulfide bond</keyword>
<keyword id="KW-0274">FAD</keyword>
<keyword id="KW-0285">Flavoprotein</keyword>
<keyword id="KW-0496">Mitochondrion</keyword>
<keyword id="KW-0560">Oxidoreductase</keyword>
<keyword id="KW-0597">Phosphoprotein</keyword>
<keyword id="KW-0874">Quinone</keyword>
<keyword id="KW-1185">Reference proteome</keyword>
<keyword id="KW-0809">Transit peptide</keyword>